<name>NOP5A_ARATH</name>
<protein>
    <recommendedName>
        <fullName>Probable nucleolar protein 5-1</fullName>
    </recommendedName>
    <alternativeName>
        <fullName>MAR-binding NOP56/58 homolog 1</fullName>
    </alternativeName>
    <alternativeName>
        <fullName>NOP58-like protein F108</fullName>
    </alternativeName>
    <alternativeName>
        <fullName>Nucleolar protein 58-1</fullName>
    </alternativeName>
</protein>
<sequence>MLILFETPGGFAIFKVLNEGKLSNVEDLGNEFSTAKLARKMVKLVAFDKFDNTAEALEAVAKLLEGTPSKGLRKFLKANCVGETLAVADSKLGNIIKEKLKIVCVHNNAVMELLRGIRSQLTELISGLGDQDLGPMSLGLSHSLARYKLKFSSDKVDTMIIQAIGLLDDLDKELNTYAMRVREWFGWHFPELAKIVQDNILYAKAVKLMGNRINAAKLDFSEILADEIEAELKEAAVISMGTEVSDLDLLHIRELCDQVLSLAEYRAQLYDYLKSRMNTIAPNLTALVGELVGARLISHGGSLLNLAKQPGSTVQILGAEKALFRALKTKHATPKYGLIFHASVVGQAAPKNKGKISRSLAAKSVLAIRCDALGDSQDNTMGVENRLKLEARLRTLEGKDLGRLSGSAKGKPKIEVYDKDKKKGSGGLITPAKTYNTAADSLLQTPTVDSENGVKEKKDKKKKKKADDEEEAKTEEPSKKKSNKKKTEAEPETAEEPAKKEKKKKRKHEEEETEMPAKKKEKSEKKKKKKTEV</sequence>
<comment type="function">
    <text evidence="1">Required for 60S ribosomal subunit biogenesis.</text>
</comment>
<comment type="subcellular location">
    <subcellularLocation>
        <location evidence="1">Nucleus</location>
        <location evidence="1">Nucleolus</location>
    </subcellularLocation>
</comment>
<comment type="similarity">
    <text evidence="4">Belongs to the NOP5/NOP56 family.</text>
</comment>
<comment type="sequence caution" evidence="4">
    <conflict type="erroneous gene model prediction">
        <sequence resource="EMBL-CDS" id="AAB61073"/>
    </conflict>
</comment>
<reference key="1">
    <citation type="submission" date="2000-09" db="EMBL/GenBank/DDBJ databases">
        <title>Arabidopsis MAR binding NOP56/58 homologs.</title>
        <authorList>
            <person name="Phelan T.J."/>
            <person name="Spiker S.L."/>
        </authorList>
    </citation>
    <scope>NUCLEOTIDE SEQUENCE [MRNA]</scope>
</reference>
<reference key="2">
    <citation type="journal article" date="2000" name="Nature">
        <title>Sequence and analysis of chromosome 5 of the plant Arabidopsis thaliana.</title>
        <authorList>
            <person name="Tabata S."/>
            <person name="Kaneko T."/>
            <person name="Nakamura Y."/>
            <person name="Kotani H."/>
            <person name="Kato T."/>
            <person name="Asamizu E."/>
            <person name="Miyajima N."/>
            <person name="Sasamoto S."/>
            <person name="Kimura T."/>
            <person name="Hosouchi T."/>
            <person name="Kawashima K."/>
            <person name="Kohara M."/>
            <person name="Matsumoto M."/>
            <person name="Matsuno A."/>
            <person name="Muraki A."/>
            <person name="Nakayama S."/>
            <person name="Nakazaki N."/>
            <person name="Naruo K."/>
            <person name="Okumura S."/>
            <person name="Shinpo S."/>
            <person name="Takeuchi C."/>
            <person name="Wada T."/>
            <person name="Watanabe A."/>
            <person name="Yamada M."/>
            <person name="Yasuda M."/>
            <person name="Sato S."/>
            <person name="de la Bastide M."/>
            <person name="Huang E."/>
            <person name="Spiegel L."/>
            <person name="Gnoj L."/>
            <person name="O'Shaughnessy A."/>
            <person name="Preston R."/>
            <person name="Habermann K."/>
            <person name="Murray J."/>
            <person name="Johnson D."/>
            <person name="Rohlfing T."/>
            <person name="Nelson J."/>
            <person name="Stoneking T."/>
            <person name="Pepin K."/>
            <person name="Spieth J."/>
            <person name="Sekhon M."/>
            <person name="Armstrong J."/>
            <person name="Becker M."/>
            <person name="Belter E."/>
            <person name="Cordum H."/>
            <person name="Cordes M."/>
            <person name="Courtney L."/>
            <person name="Courtney W."/>
            <person name="Dante M."/>
            <person name="Du H."/>
            <person name="Edwards J."/>
            <person name="Fryman J."/>
            <person name="Haakensen B."/>
            <person name="Lamar E."/>
            <person name="Latreille P."/>
            <person name="Leonard S."/>
            <person name="Meyer R."/>
            <person name="Mulvaney E."/>
            <person name="Ozersky P."/>
            <person name="Riley A."/>
            <person name="Strowmatt C."/>
            <person name="Wagner-McPherson C."/>
            <person name="Wollam A."/>
            <person name="Yoakum M."/>
            <person name="Bell M."/>
            <person name="Dedhia N."/>
            <person name="Parnell L."/>
            <person name="Shah R."/>
            <person name="Rodriguez M."/>
            <person name="Hoon See L."/>
            <person name="Vil D."/>
            <person name="Baker J."/>
            <person name="Kirchoff K."/>
            <person name="Toth K."/>
            <person name="King L."/>
            <person name="Bahret A."/>
            <person name="Miller B."/>
            <person name="Marra M.A."/>
            <person name="Martienssen R."/>
            <person name="McCombie W.R."/>
            <person name="Wilson R.K."/>
            <person name="Murphy G."/>
            <person name="Bancroft I."/>
            <person name="Volckaert G."/>
            <person name="Wambutt R."/>
            <person name="Duesterhoeft A."/>
            <person name="Stiekema W."/>
            <person name="Pohl T."/>
            <person name="Entian K.-D."/>
            <person name="Terryn N."/>
            <person name="Hartley N."/>
            <person name="Bent E."/>
            <person name="Johnson S."/>
            <person name="Langham S.-A."/>
            <person name="McCullagh B."/>
            <person name="Robben J."/>
            <person name="Grymonprez B."/>
            <person name="Zimmermann W."/>
            <person name="Ramsperger U."/>
            <person name="Wedler H."/>
            <person name="Balke K."/>
            <person name="Wedler E."/>
            <person name="Peters S."/>
            <person name="van Staveren M."/>
            <person name="Dirkse W."/>
            <person name="Mooijman P."/>
            <person name="Klein Lankhorst R."/>
            <person name="Weitzenegger T."/>
            <person name="Bothe G."/>
            <person name="Rose M."/>
            <person name="Hauf J."/>
            <person name="Berneiser S."/>
            <person name="Hempel S."/>
            <person name="Feldpausch M."/>
            <person name="Lamberth S."/>
            <person name="Villarroel R."/>
            <person name="Gielen J."/>
            <person name="Ardiles W."/>
            <person name="Bents O."/>
            <person name="Lemcke K."/>
            <person name="Kolesov G."/>
            <person name="Mayer K.F.X."/>
            <person name="Rudd S."/>
            <person name="Schoof H."/>
            <person name="Schueller C."/>
            <person name="Zaccaria P."/>
            <person name="Mewes H.-W."/>
            <person name="Bevan M."/>
            <person name="Fransz P.F."/>
        </authorList>
    </citation>
    <scope>NUCLEOTIDE SEQUENCE [LARGE SCALE GENOMIC DNA]</scope>
    <source>
        <strain>cv. Columbia</strain>
    </source>
</reference>
<reference key="3">
    <citation type="journal article" date="2017" name="Plant J.">
        <title>Araport11: a complete reannotation of the Arabidopsis thaliana reference genome.</title>
        <authorList>
            <person name="Cheng C.Y."/>
            <person name="Krishnakumar V."/>
            <person name="Chan A.P."/>
            <person name="Thibaud-Nissen F."/>
            <person name="Schobel S."/>
            <person name="Town C.D."/>
        </authorList>
    </citation>
    <scope>GENOME REANNOTATION</scope>
    <source>
        <strain>cv. Columbia</strain>
    </source>
</reference>
<reference key="4">
    <citation type="journal article" date="2003" name="Science">
        <title>Empirical analysis of transcriptional activity in the Arabidopsis genome.</title>
        <authorList>
            <person name="Yamada K."/>
            <person name="Lim J."/>
            <person name="Dale J.M."/>
            <person name="Chen H."/>
            <person name="Shinn P."/>
            <person name="Palm C.J."/>
            <person name="Southwick A.M."/>
            <person name="Wu H.C."/>
            <person name="Kim C.J."/>
            <person name="Nguyen M."/>
            <person name="Pham P.K."/>
            <person name="Cheuk R.F."/>
            <person name="Karlin-Newmann G."/>
            <person name="Liu S.X."/>
            <person name="Lam B."/>
            <person name="Sakano H."/>
            <person name="Wu T."/>
            <person name="Yu G."/>
            <person name="Miranda M."/>
            <person name="Quach H.L."/>
            <person name="Tripp M."/>
            <person name="Chang C.H."/>
            <person name="Lee J.M."/>
            <person name="Toriumi M.J."/>
            <person name="Chan M.M."/>
            <person name="Tang C.C."/>
            <person name="Onodera C.S."/>
            <person name="Deng J.M."/>
            <person name="Akiyama K."/>
            <person name="Ansari Y."/>
            <person name="Arakawa T."/>
            <person name="Banh J."/>
            <person name="Banno F."/>
            <person name="Bowser L."/>
            <person name="Brooks S.Y."/>
            <person name="Carninci P."/>
            <person name="Chao Q."/>
            <person name="Choy N."/>
            <person name="Enju A."/>
            <person name="Goldsmith A.D."/>
            <person name="Gurjal M."/>
            <person name="Hansen N.F."/>
            <person name="Hayashizaki Y."/>
            <person name="Johnson-Hopson C."/>
            <person name="Hsuan V.W."/>
            <person name="Iida K."/>
            <person name="Karnes M."/>
            <person name="Khan S."/>
            <person name="Koesema E."/>
            <person name="Ishida J."/>
            <person name="Jiang P.X."/>
            <person name="Jones T."/>
            <person name="Kawai J."/>
            <person name="Kamiya A."/>
            <person name="Meyers C."/>
            <person name="Nakajima M."/>
            <person name="Narusaka M."/>
            <person name="Seki M."/>
            <person name="Sakurai T."/>
            <person name="Satou M."/>
            <person name="Tamse R."/>
            <person name="Vaysberg M."/>
            <person name="Wallender E.K."/>
            <person name="Wong C."/>
            <person name="Yamamura Y."/>
            <person name="Yuan S."/>
            <person name="Shinozaki K."/>
            <person name="Davis R.W."/>
            <person name="Theologis A."/>
            <person name="Ecker J.R."/>
        </authorList>
    </citation>
    <scope>NUCLEOTIDE SEQUENCE [LARGE SCALE MRNA]</scope>
    <source>
        <strain>cv. Columbia</strain>
    </source>
</reference>
<reference key="5">
    <citation type="journal article" date="2007" name="Mol. Cell. Proteomics">
        <title>Multidimensional protein identification technology (MudPIT) analysis of ubiquitinated proteins in plants.</title>
        <authorList>
            <person name="Maor R."/>
            <person name="Jones A."/>
            <person name="Nuehse T.S."/>
            <person name="Studholme D.J."/>
            <person name="Peck S.C."/>
            <person name="Shirasu K."/>
        </authorList>
    </citation>
    <scope>IDENTIFICATION BY MASS SPECTROMETRY [LARGE SCALE ANALYSIS]</scope>
    <source>
        <strain>cv. Landsberg erecta</strain>
    </source>
</reference>
<accession>O04658</accession>
<accession>Q8H0T7</accession>
<accession>Q9FPT6</accession>
<dbReference type="EMBL" id="AF302490">
    <property type="protein sequence ID" value="AAG40836.1"/>
    <property type="molecule type" value="mRNA"/>
</dbReference>
<dbReference type="EMBL" id="AF007271">
    <property type="protein sequence ID" value="AAB61073.1"/>
    <property type="status" value="ALT_SEQ"/>
    <property type="molecule type" value="Genomic_DNA"/>
</dbReference>
<dbReference type="EMBL" id="CP002688">
    <property type="protein sequence ID" value="AED93652.1"/>
    <property type="molecule type" value="Genomic_DNA"/>
</dbReference>
<dbReference type="EMBL" id="AY074281">
    <property type="protein sequence ID" value="AAL66978.1"/>
    <property type="molecule type" value="mRNA"/>
</dbReference>
<dbReference type="EMBL" id="AY096684">
    <property type="protein sequence ID" value="AAM20318.1"/>
    <property type="molecule type" value="mRNA"/>
</dbReference>
<dbReference type="EMBL" id="BT002060">
    <property type="protein sequence ID" value="AAN72071.1"/>
    <property type="molecule type" value="mRNA"/>
</dbReference>
<dbReference type="PIR" id="T01807">
    <property type="entry name" value="T01807"/>
</dbReference>
<dbReference type="RefSeq" id="NP_198064.1">
    <property type="nucleotide sequence ID" value="NM_122594.3"/>
</dbReference>
<dbReference type="SMR" id="O04658"/>
<dbReference type="BioGRID" id="18044">
    <property type="interactions" value="41"/>
</dbReference>
<dbReference type="FunCoup" id="O04658">
    <property type="interactions" value="4214"/>
</dbReference>
<dbReference type="IntAct" id="O04658">
    <property type="interactions" value="3"/>
</dbReference>
<dbReference type="STRING" id="3702.O04658"/>
<dbReference type="iPTMnet" id="O04658"/>
<dbReference type="PaxDb" id="3702-AT5G27120.1"/>
<dbReference type="ProteomicsDB" id="250539"/>
<dbReference type="EnsemblPlants" id="AT5G27120.1">
    <property type="protein sequence ID" value="AT5G27120.1"/>
    <property type="gene ID" value="AT5G27120"/>
</dbReference>
<dbReference type="GeneID" id="832770"/>
<dbReference type="Gramene" id="AT5G27120.1">
    <property type="protein sequence ID" value="AT5G27120.1"/>
    <property type="gene ID" value="AT5G27120"/>
</dbReference>
<dbReference type="KEGG" id="ath:AT5G27120"/>
<dbReference type="Araport" id="AT5G27120"/>
<dbReference type="TAIR" id="AT5G27120"/>
<dbReference type="eggNOG" id="KOG2572">
    <property type="taxonomic scope" value="Eukaryota"/>
</dbReference>
<dbReference type="HOGENOM" id="CLU_015495_5_2_1"/>
<dbReference type="InParanoid" id="O04658"/>
<dbReference type="OMA" id="THCDGET"/>
<dbReference type="PhylomeDB" id="O04658"/>
<dbReference type="CD-CODE" id="4299E36E">
    <property type="entry name" value="Nucleolus"/>
</dbReference>
<dbReference type="PRO" id="PR:O04658"/>
<dbReference type="Proteomes" id="UP000006548">
    <property type="component" value="Chromosome 5"/>
</dbReference>
<dbReference type="ExpressionAtlas" id="O04658">
    <property type="expression patterns" value="baseline and differential"/>
</dbReference>
<dbReference type="GO" id="GO:0031428">
    <property type="term" value="C:box C/D methylation guide snoRNP complex"/>
    <property type="evidence" value="ECO:0007669"/>
    <property type="project" value="InterPro"/>
</dbReference>
<dbReference type="GO" id="GO:0005730">
    <property type="term" value="C:nucleolus"/>
    <property type="evidence" value="ECO:0007005"/>
    <property type="project" value="TAIR"/>
</dbReference>
<dbReference type="GO" id="GO:0009506">
    <property type="term" value="C:plasmodesma"/>
    <property type="evidence" value="ECO:0007005"/>
    <property type="project" value="TAIR"/>
</dbReference>
<dbReference type="GO" id="GO:0032040">
    <property type="term" value="C:small-subunit processome"/>
    <property type="evidence" value="ECO:0007669"/>
    <property type="project" value="InterPro"/>
</dbReference>
<dbReference type="GO" id="GO:0003729">
    <property type="term" value="F:mRNA binding"/>
    <property type="evidence" value="ECO:0000314"/>
    <property type="project" value="TAIR"/>
</dbReference>
<dbReference type="GO" id="GO:0030515">
    <property type="term" value="F:snoRNA binding"/>
    <property type="evidence" value="ECO:0007669"/>
    <property type="project" value="InterPro"/>
</dbReference>
<dbReference type="GO" id="GO:0042254">
    <property type="term" value="P:ribosome biogenesis"/>
    <property type="evidence" value="ECO:0007669"/>
    <property type="project" value="UniProtKB-KW"/>
</dbReference>
<dbReference type="FunFam" id="1.10.246.90:FF:000004">
    <property type="entry name" value="Nucleolar protein 58"/>
    <property type="match status" value="1"/>
</dbReference>
<dbReference type="FunFam" id="1.10.287.4070:FF:000001">
    <property type="entry name" value="Probable Nucleolar protein 58"/>
    <property type="match status" value="1"/>
</dbReference>
<dbReference type="Gene3D" id="1.10.287.4070">
    <property type="match status" value="1"/>
</dbReference>
<dbReference type="Gene3D" id="1.10.246.90">
    <property type="entry name" value="Nop domain"/>
    <property type="match status" value="1"/>
</dbReference>
<dbReference type="InterPro" id="IPR045056">
    <property type="entry name" value="Nop56/Nop58"/>
</dbReference>
<dbReference type="InterPro" id="IPR012974">
    <property type="entry name" value="NOP58/56_N"/>
</dbReference>
<dbReference type="InterPro" id="IPR042239">
    <property type="entry name" value="Nop_C"/>
</dbReference>
<dbReference type="InterPro" id="IPR002687">
    <property type="entry name" value="Nop_dom"/>
</dbReference>
<dbReference type="InterPro" id="IPR036070">
    <property type="entry name" value="Nop_dom_sf"/>
</dbReference>
<dbReference type="InterPro" id="IPR012976">
    <property type="entry name" value="NOSIC"/>
</dbReference>
<dbReference type="PANTHER" id="PTHR10894">
    <property type="entry name" value="NUCLEOLAR PROTEIN 5 NUCLEOLAR PROTEIN NOP5 NOP58"/>
    <property type="match status" value="1"/>
</dbReference>
<dbReference type="PANTHER" id="PTHR10894:SF1">
    <property type="entry name" value="NUCLEOLAR PROTEIN 58"/>
    <property type="match status" value="1"/>
</dbReference>
<dbReference type="Pfam" id="PF01798">
    <property type="entry name" value="Nop"/>
    <property type="match status" value="1"/>
</dbReference>
<dbReference type="Pfam" id="PF08156">
    <property type="entry name" value="NOP5NT"/>
    <property type="match status" value="1"/>
</dbReference>
<dbReference type="SMART" id="SM00931">
    <property type="entry name" value="NOSIC"/>
    <property type="match status" value="1"/>
</dbReference>
<dbReference type="SUPFAM" id="SSF89124">
    <property type="entry name" value="Nop domain"/>
    <property type="match status" value="1"/>
</dbReference>
<dbReference type="PROSITE" id="PS51358">
    <property type="entry name" value="NOP"/>
    <property type="match status" value="1"/>
</dbReference>
<evidence type="ECO:0000250" key="1"/>
<evidence type="ECO:0000255" key="2">
    <source>
        <dbReference type="PROSITE-ProRule" id="PRU00690"/>
    </source>
</evidence>
<evidence type="ECO:0000256" key="3">
    <source>
        <dbReference type="SAM" id="MobiDB-lite"/>
    </source>
</evidence>
<evidence type="ECO:0000305" key="4"/>
<organism>
    <name type="scientific">Arabidopsis thaliana</name>
    <name type="common">Mouse-ear cress</name>
    <dbReference type="NCBI Taxonomy" id="3702"/>
    <lineage>
        <taxon>Eukaryota</taxon>
        <taxon>Viridiplantae</taxon>
        <taxon>Streptophyta</taxon>
        <taxon>Embryophyta</taxon>
        <taxon>Tracheophyta</taxon>
        <taxon>Spermatophyta</taxon>
        <taxon>Magnoliopsida</taxon>
        <taxon>eudicotyledons</taxon>
        <taxon>Gunneridae</taxon>
        <taxon>Pentapetalae</taxon>
        <taxon>rosids</taxon>
        <taxon>malvids</taxon>
        <taxon>Brassicales</taxon>
        <taxon>Brassicaceae</taxon>
        <taxon>Camelineae</taxon>
        <taxon>Arabidopsis</taxon>
    </lineage>
</organism>
<keyword id="KW-0539">Nucleus</keyword>
<keyword id="KW-1185">Reference proteome</keyword>
<keyword id="KW-0690">Ribosome biogenesis</keyword>
<proteinExistence type="evidence at protein level"/>
<feature type="chain" id="PRO_0000219031" description="Probable nucleolar protein 5-1">
    <location>
        <begin position="1"/>
        <end position="533"/>
    </location>
</feature>
<feature type="domain" description="Nop" evidence="2">
    <location>
        <begin position="280"/>
        <end position="398"/>
    </location>
</feature>
<feature type="region of interest" description="Disordered" evidence="3">
    <location>
        <begin position="402"/>
        <end position="533"/>
    </location>
</feature>
<feature type="compositionally biased region" description="Basic and acidic residues" evidence="3">
    <location>
        <begin position="412"/>
        <end position="423"/>
    </location>
</feature>
<feature type="compositionally biased region" description="Polar residues" evidence="3">
    <location>
        <begin position="433"/>
        <end position="450"/>
    </location>
</feature>
<feature type="compositionally biased region" description="Basic and acidic residues" evidence="3">
    <location>
        <begin position="474"/>
        <end position="489"/>
    </location>
</feature>
<feature type="compositionally biased region" description="Basic and acidic residues" evidence="3">
    <location>
        <begin position="515"/>
        <end position="524"/>
    </location>
</feature>
<gene>
    <name type="primary">NOP5-1</name>
    <name type="synonym">NOP58-1</name>
    <name type="ordered locus">At5g27120</name>
    <name type="ORF">T21B4_30</name>
    <name type="ORF">TM021B04.12</name>
</gene>